<dbReference type="EC" id="5.3.1.6" evidence="1"/>
<dbReference type="EMBL" id="CP000282">
    <property type="protein sequence ID" value="ABD82642.1"/>
    <property type="molecule type" value="Genomic_DNA"/>
</dbReference>
<dbReference type="RefSeq" id="WP_011469858.1">
    <property type="nucleotide sequence ID" value="NC_007912.1"/>
</dbReference>
<dbReference type="SMR" id="Q21F87"/>
<dbReference type="STRING" id="203122.Sde_3387"/>
<dbReference type="GeneID" id="98615005"/>
<dbReference type="KEGG" id="sde:Sde_3387"/>
<dbReference type="eggNOG" id="COG0120">
    <property type="taxonomic scope" value="Bacteria"/>
</dbReference>
<dbReference type="HOGENOM" id="CLU_056590_1_1_6"/>
<dbReference type="OrthoDB" id="5870696at2"/>
<dbReference type="UniPathway" id="UPA00115">
    <property type="reaction ID" value="UER00412"/>
</dbReference>
<dbReference type="Proteomes" id="UP000001947">
    <property type="component" value="Chromosome"/>
</dbReference>
<dbReference type="GO" id="GO:0005829">
    <property type="term" value="C:cytosol"/>
    <property type="evidence" value="ECO:0007669"/>
    <property type="project" value="TreeGrafter"/>
</dbReference>
<dbReference type="GO" id="GO:0004751">
    <property type="term" value="F:ribose-5-phosphate isomerase activity"/>
    <property type="evidence" value="ECO:0007669"/>
    <property type="project" value="UniProtKB-UniRule"/>
</dbReference>
<dbReference type="GO" id="GO:0006014">
    <property type="term" value="P:D-ribose metabolic process"/>
    <property type="evidence" value="ECO:0007669"/>
    <property type="project" value="TreeGrafter"/>
</dbReference>
<dbReference type="GO" id="GO:0009052">
    <property type="term" value="P:pentose-phosphate shunt, non-oxidative branch"/>
    <property type="evidence" value="ECO:0007669"/>
    <property type="project" value="UniProtKB-UniRule"/>
</dbReference>
<dbReference type="CDD" id="cd01398">
    <property type="entry name" value="RPI_A"/>
    <property type="match status" value="1"/>
</dbReference>
<dbReference type="FunFam" id="3.30.70.260:FF:000004">
    <property type="entry name" value="Ribose-5-phosphate isomerase A"/>
    <property type="match status" value="1"/>
</dbReference>
<dbReference type="FunFam" id="3.40.50.1360:FF:000001">
    <property type="entry name" value="Ribose-5-phosphate isomerase A"/>
    <property type="match status" value="1"/>
</dbReference>
<dbReference type="Gene3D" id="3.30.70.260">
    <property type="match status" value="1"/>
</dbReference>
<dbReference type="Gene3D" id="3.40.50.1360">
    <property type="match status" value="1"/>
</dbReference>
<dbReference type="HAMAP" id="MF_00170">
    <property type="entry name" value="Rib_5P_isom_A"/>
    <property type="match status" value="1"/>
</dbReference>
<dbReference type="InterPro" id="IPR037171">
    <property type="entry name" value="NagB/RpiA_transferase-like"/>
</dbReference>
<dbReference type="InterPro" id="IPR020672">
    <property type="entry name" value="Ribose5P_isomerase_typA_subgr"/>
</dbReference>
<dbReference type="InterPro" id="IPR004788">
    <property type="entry name" value="Ribose5P_isomerase_type_A"/>
</dbReference>
<dbReference type="NCBIfam" id="NF001924">
    <property type="entry name" value="PRK00702.1"/>
    <property type="match status" value="1"/>
</dbReference>
<dbReference type="NCBIfam" id="TIGR00021">
    <property type="entry name" value="rpiA"/>
    <property type="match status" value="1"/>
</dbReference>
<dbReference type="PANTHER" id="PTHR11934">
    <property type="entry name" value="RIBOSE-5-PHOSPHATE ISOMERASE"/>
    <property type="match status" value="1"/>
</dbReference>
<dbReference type="PANTHER" id="PTHR11934:SF0">
    <property type="entry name" value="RIBOSE-5-PHOSPHATE ISOMERASE"/>
    <property type="match status" value="1"/>
</dbReference>
<dbReference type="Pfam" id="PF06026">
    <property type="entry name" value="Rib_5-P_isom_A"/>
    <property type="match status" value="1"/>
</dbReference>
<dbReference type="SUPFAM" id="SSF75445">
    <property type="entry name" value="D-ribose-5-phosphate isomerase (RpiA), lid domain"/>
    <property type="match status" value="1"/>
</dbReference>
<dbReference type="SUPFAM" id="SSF100950">
    <property type="entry name" value="NagB/RpiA/CoA transferase-like"/>
    <property type="match status" value="1"/>
</dbReference>
<keyword id="KW-0413">Isomerase</keyword>
<keyword id="KW-1185">Reference proteome</keyword>
<evidence type="ECO:0000255" key="1">
    <source>
        <dbReference type="HAMAP-Rule" id="MF_00170"/>
    </source>
</evidence>
<comment type="function">
    <text evidence="1">Catalyzes the reversible conversion of ribose-5-phosphate to ribulose 5-phosphate.</text>
</comment>
<comment type="catalytic activity">
    <reaction evidence="1">
        <text>aldehydo-D-ribose 5-phosphate = D-ribulose 5-phosphate</text>
        <dbReference type="Rhea" id="RHEA:14657"/>
        <dbReference type="ChEBI" id="CHEBI:58121"/>
        <dbReference type="ChEBI" id="CHEBI:58273"/>
        <dbReference type="EC" id="5.3.1.6"/>
    </reaction>
</comment>
<comment type="pathway">
    <text evidence="1">Carbohydrate degradation; pentose phosphate pathway; D-ribose 5-phosphate from D-ribulose 5-phosphate (non-oxidative stage): step 1/1.</text>
</comment>
<comment type="subunit">
    <text evidence="1">Homodimer.</text>
</comment>
<comment type="similarity">
    <text evidence="1">Belongs to the ribose 5-phosphate isomerase family.</text>
</comment>
<accession>Q21F87</accession>
<protein>
    <recommendedName>
        <fullName evidence="1">Ribose-5-phosphate isomerase A</fullName>
        <ecNumber evidence="1">5.3.1.6</ecNumber>
    </recommendedName>
    <alternativeName>
        <fullName evidence="1">Phosphoriboisomerase A</fullName>
        <shortName evidence="1">PRI</shortName>
    </alternativeName>
</protein>
<gene>
    <name evidence="1" type="primary">rpiA</name>
    <name type="ordered locus">Sde_3387</name>
</gene>
<name>RPIA_SACD2</name>
<organism>
    <name type="scientific">Saccharophagus degradans (strain 2-40 / ATCC 43961 / DSM 17024)</name>
    <dbReference type="NCBI Taxonomy" id="203122"/>
    <lineage>
        <taxon>Bacteria</taxon>
        <taxon>Pseudomonadati</taxon>
        <taxon>Pseudomonadota</taxon>
        <taxon>Gammaproteobacteria</taxon>
        <taxon>Cellvibrionales</taxon>
        <taxon>Cellvibrionaceae</taxon>
        <taxon>Saccharophagus</taxon>
    </lineage>
</organism>
<reference key="1">
    <citation type="journal article" date="2008" name="PLoS Genet.">
        <title>Complete genome sequence of the complex carbohydrate-degrading marine bacterium, Saccharophagus degradans strain 2-40 T.</title>
        <authorList>
            <person name="Weiner R.M."/>
            <person name="Taylor L.E. II"/>
            <person name="Henrissat B."/>
            <person name="Hauser L."/>
            <person name="Land M."/>
            <person name="Coutinho P.M."/>
            <person name="Rancurel C."/>
            <person name="Saunders E.H."/>
            <person name="Longmire A.G."/>
            <person name="Zhang H."/>
            <person name="Bayer E.A."/>
            <person name="Gilbert H.J."/>
            <person name="Larimer F."/>
            <person name="Zhulin I.B."/>
            <person name="Ekborg N.A."/>
            <person name="Lamed R."/>
            <person name="Richardson P.M."/>
            <person name="Borovok I."/>
            <person name="Hutcheson S."/>
        </authorList>
    </citation>
    <scope>NUCLEOTIDE SEQUENCE [LARGE SCALE GENOMIC DNA]</scope>
    <source>
        <strain>2-40 / ATCC 43961 / DSM 17024</strain>
    </source>
</reference>
<feature type="chain" id="PRO_1000016984" description="Ribose-5-phosphate isomerase A">
    <location>
        <begin position="1"/>
        <end position="226"/>
    </location>
</feature>
<feature type="active site" description="Proton acceptor" evidence="1">
    <location>
        <position position="107"/>
    </location>
</feature>
<feature type="binding site" evidence="1">
    <location>
        <begin position="32"/>
        <end position="35"/>
    </location>
    <ligand>
        <name>substrate</name>
    </ligand>
</feature>
<feature type="binding site" evidence="1">
    <location>
        <begin position="85"/>
        <end position="88"/>
    </location>
    <ligand>
        <name>substrate</name>
    </ligand>
</feature>
<feature type="binding site" evidence="1">
    <location>
        <begin position="98"/>
        <end position="101"/>
    </location>
    <ligand>
        <name>substrate</name>
    </ligand>
</feature>
<feature type="binding site" evidence="1">
    <location>
        <position position="125"/>
    </location>
    <ligand>
        <name>substrate</name>
    </ligand>
</feature>
<proteinExistence type="inferred from homology"/>
<sequence length="226" mass="23917">MTQDELKQAVAQAALDYILPHLEDDMILGIGTGSTARLFIDLLAAHKGKFDGAVSSSEASSEQLKGHGIPVYDLNSVDSLPFYIDGADEANAQLHLIKGGGAALTREKIITAVADKFICIADASKDVDVLGKFPLPVEVIPMARAHVAREIVKLGGNPVHRQDCVTDNGCQILDVYDLAIHDAPALEAKLNNIAGVVTNGLFALRPADVLLLGTTNGVETRFAAKP</sequence>